<organism>
    <name type="scientific">Nitrosococcus oceani (strain ATCC 19707 / BCRC 17464 / JCM 30415 / NCIMB 11848 / C-107)</name>
    <dbReference type="NCBI Taxonomy" id="323261"/>
    <lineage>
        <taxon>Bacteria</taxon>
        <taxon>Pseudomonadati</taxon>
        <taxon>Pseudomonadota</taxon>
        <taxon>Gammaproteobacteria</taxon>
        <taxon>Chromatiales</taxon>
        <taxon>Chromatiaceae</taxon>
        <taxon>Nitrosococcus</taxon>
    </lineage>
</organism>
<comment type="function">
    <text evidence="1">ATP-dependent specificity component of the Clp protease. It directs the protease to specific substrates. Can perform chaperone functions in the absence of ClpP.</text>
</comment>
<comment type="subunit">
    <text evidence="1">Component of the ClpX-ClpP complex. Forms a hexameric ring that, in the presence of ATP, binds to fourteen ClpP subunits assembled into a disk-like structure with a central cavity, resembling the structure of eukaryotic proteasomes.</text>
</comment>
<comment type="similarity">
    <text evidence="1">Belongs to the ClpX chaperone family.</text>
</comment>
<accession>Q3JAJ9</accession>
<proteinExistence type="inferred from homology"/>
<name>CLPX_NITOC</name>
<sequence>MNNDKPRRGDDDRLLYCSFCGKSQHEVRKLIAGPSVFICDECVELCNDIIREEMQDRLSSGKSSHLPTPHEIRDILNQYVIGQNHAKKVLSVAVYNHYKRLQLGKKNDDVELSKSNILLIGPTGSGKTLLAETLARLLDVPFTIADATTLTEAGYVGEDVENIIQKLLQKCDYDVEKAQTGIVYVDEIDKISRKSDNPSITRDVSGEGVQQALLKLIEGTIASVPPQGGRKHPQQEFLQVNTANILFICGGAFAGLEKIIRDRSKKGGIGFSAEVKSVEDKRSMGEVLQAVEPEDLIKYGLIPEFVGRMPVVATLDELDEAALIRILREPKNALTKQFARLFEMENCKVEFREDALRAVATKAMELKTGARGLRSILENVLLDTMYDLPSMDHVSKVVIDESVVKGEAEPLLIYENQETKAASD</sequence>
<feature type="chain" id="PRO_1000097975" description="ATP-dependent Clp protease ATP-binding subunit ClpX">
    <location>
        <begin position="1"/>
        <end position="424"/>
    </location>
</feature>
<feature type="domain" description="ClpX-type ZB" evidence="2">
    <location>
        <begin position="5"/>
        <end position="58"/>
    </location>
</feature>
<feature type="binding site" evidence="2">
    <location>
        <position position="17"/>
    </location>
    <ligand>
        <name>Zn(2+)</name>
        <dbReference type="ChEBI" id="CHEBI:29105"/>
    </ligand>
</feature>
<feature type="binding site" evidence="2">
    <location>
        <position position="20"/>
    </location>
    <ligand>
        <name>Zn(2+)</name>
        <dbReference type="ChEBI" id="CHEBI:29105"/>
    </ligand>
</feature>
<feature type="binding site" evidence="2">
    <location>
        <position position="39"/>
    </location>
    <ligand>
        <name>Zn(2+)</name>
        <dbReference type="ChEBI" id="CHEBI:29105"/>
    </ligand>
</feature>
<feature type="binding site" evidence="2">
    <location>
        <position position="42"/>
    </location>
    <ligand>
        <name>Zn(2+)</name>
        <dbReference type="ChEBI" id="CHEBI:29105"/>
    </ligand>
</feature>
<feature type="binding site" evidence="1">
    <location>
        <begin position="122"/>
        <end position="129"/>
    </location>
    <ligand>
        <name>ATP</name>
        <dbReference type="ChEBI" id="CHEBI:30616"/>
    </ligand>
</feature>
<evidence type="ECO:0000255" key="1">
    <source>
        <dbReference type="HAMAP-Rule" id="MF_00175"/>
    </source>
</evidence>
<evidence type="ECO:0000255" key="2">
    <source>
        <dbReference type="PROSITE-ProRule" id="PRU01250"/>
    </source>
</evidence>
<protein>
    <recommendedName>
        <fullName evidence="1">ATP-dependent Clp protease ATP-binding subunit ClpX</fullName>
    </recommendedName>
</protein>
<reference key="1">
    <citation type="journal article" date="2006" name="Appl. Environ. Microbiol.">
        <title>Complete genome sequence of the marine, chemolithoautotrophic, ammonia-oxidizing bacterium Nitrosococcus oceani ATCC 19707.</title>
        <authorList>
            <person name="Klotz M.G."/>
            <person name="Arp D.J."/>
            <person name="Chain P.S.G."/>
            <person name="El-Sheikh A.F."/>
            <person name="Hauser L.J."/>
            <person name="Hommes N.G."/>
            <person name="Larimer F.W."/>
            <person name="Malfatti S.A."/>
            <person name="Norton J.M."/>
            <person name="Poret-Peterson A.T."/>
            <person name="Vergez L.M."/>
            <person name="Ward B.B."/>
        </authorList>
    </citation>
    <scope>NUCLEOTIDE SEQUENCE [LARGE SCALE GENOMIC DNA]</scope>
    <source>
        <strain>ATCC 19707 / BCRC 17464 / JCM 30415 / NCIMB 11848 / C-107</strain>
    </source>
</reference>
<gene>
    <name evidence="1" type="primary">clpX</name>
    <name type="ordered locus">Noc_1675</name>
</gene>
<dbReference type="EMBL" id="CP000127">
    <property type="protein sequence ID" value="ABA58147.1"/>
    <property type="molecule type" value="Genomic_DNA"/>
</dbReference>
<dbReference type="RefSeq" id="WP_002809665.1">
    <property type="nucleotide sequence ID" value="NC_007484.1"/>
</dbReference>
<dbReference type="SMR" id="Q3JAJ9"/>
<dbReference type="FunCoup" id="Q3JAJ9">
    <property type="interactions" value="427"/>
</dbReference>
<dbReference type="STRING" id="323261.Noc_1675"/>
<dbReference type="KEGG" id="noc:Noc_1675"/>
<dbReference type="eggNOG" id="COG1219">
    <property type="taxonomic scope" value="Bacteria"/>
</dbReference>
<dbReference type="HOGENOM" id="CLU_014218_8_2_6"/>
<dbReference type="InParanoid" id="Q3JAJ9"/>
<dbReference type="Proteomes" id="UP000006838">
    <property type="component" value="Chromosome"/>
</dbReference>
<dbReference type="GO" id="GO:0009376">
    <property type="term" value="C:HslUV protease complex"/>
    <property type="evidence" value="ECO:0007669"/>
    <property type="project" value="TreeGrafter"/>
</dbReference>
<dbReference type="GO" id="GO:0005524">
    <property type="term" value="F:ATP binding"/>
    <property type="evidence" value="ECO:0007669"/>
    <property type="project" value="UniProtKB-UniRule"/>
</dbReference>
<dbReference type="GO" id="GO:0016887">
    <property type="term" value="F:ATP hydrolysis activity"/>
    <property type="evidence" value="ECO:0007669"/>
    <property type="project" value="InterPro"/>
</dbReference>
<dbReference type="GO" id="GO:0140662">
    <property type="term" value="F:ATP-dependent protein folding chaperone"/>
    <property type="evidence" value="ECO:0007669"/>
    <property type="project" value="InterPro"/>
</dbReference>
<dbReference type="GO" id="GO:0046983">
    <property type="term" value="F:protein dimerization activity"/>
    <property type="evidence" value="ECO:0007669"/>
    <property type="project" value="InterPro"/>
</dbReference>
<dbReference type="GO" id="GO:0051082">
    <property type="term" value="F:unfolded protein binding"/>
    <property type="evidence" value="ECO:0007669"/>
    <property type="project" value="UniProtKB-UniRule"/>
</dbReference>
<dbReference type="GO" id="GO:0008270">
    <property type="term" value="F:zinc ion binding"/>
    <property type="evidence" value="ECO:0007669"/>
    <property type="project" value="InterPro"/>
</dbReference>
<dbReference type="GO" id="GO:0051301">
    <property type="term" value="P:cell division"/>
    <property type="evidence" value="ECO:0007669"/>
    <property type="project" value="TreeGrafter"/>
</dbReference>
<dbReference type="GO" id="GO:0051603">
    <property type="term" value="P:proteolysis involved in protein catabolic process"/>
    <property type="evidence" value="ECO:0007669"/>
    <property type="project" value="TreeGrafter"/>
</dbReference>
<dbReference type="CDD" id="cd19497">
    <property type="entry name" value="RecA-like_ClpX"/>
    <property type="match status" value="1"/>
</dbReference>
<dbReference type="FunFam" id="1.10.8.60:FF:000002">
    <property type="entry name" value="ATP-dependent Clp protease ATP-binding subunit ClpX"/>
    <property type="match status" value="1"/>
</dbReference>
<dbReference type="FunFam" id="3.40.50.300:FF:000005">
    <property type="entry name" value="ATP-dependent Clp protease ATP-binding subunit ClpX"/>
    <property type="match status" value="1"/>
</dbReference>
<dbReference type="Gene3D" id="1.10.8.60">
    <property type="match status" value="1"/>
</dbReference>
<dbReference type="Gene3D" id="6.20.220.10">
    <property type="entry name" value="ClpX chaperone, C4-type zinc finger domain"/>
    <property type="match status" value="1"/>
</dbReference>
<dbReference type="Gene3D" id="3.40.50.300">
    <property type="entry name" value="P-loop containing nucleotide triphosphate hydrolases"/>
    <property type="match status" value="1"/>
</dbReference>
<dbReference type="HAMAP" id="MF_00175">
    <property type="entry name" value="ClpX"/>
    <property type="match status" value="1"/>
</dbReference>
<dbReference type="InterPro" id="IPR003593">
    <property type="entry name" value="AAA+_ATPase"/>
</dbReference>
<dbReference type="InterPro" id="IPR050052">
    <property type="entry name" value="ATP-dep_Clp_protease_ClpX"/>
</dbReference>
<dbReference type="InterPro" id="IPR003959">
    <property type="entry name" value="ATPase_AAA_core"/>
</dbReference>
<dbReference type="InterPro" id="IPR019489">
    <property type="entry name" value="Clp_ATPase_C"/>
</dbReference>
<dbReference type="InterPro" id="IPR004487">
    <property type="entry name" value="Clp_protease_ATP-bd_su_ClpX"/>
</dbReference>
<dbReference type="InterPro" id="IPR046425">
    <property type="entry name" value="ClpX_bact"/>
</dbReference>
<dbReference type="InterPro" id="IPR027417">
    <property type="entry name" value="P-loop_NTPase"/>
</dbReference>
<dbReference type="InterPro" id="IPR010603">
    <property type="entry name" value="Znf_CppX_C4"/>
</dbReference>
<dbReference type="InterPro" id="IPR038366">
    <property type="entry name" value="Znf_CppX_C4_sf"/>
</dbReference>
<dbReference type="NCBIfam" id="TIGR00382">
    <property type="entry name" value="clpX"/>
    <property type="match status" value="1"/>
</dbReference>
<dbReference type="NCBIfam" id="NF003745">
    <property type="entry name" value="PRK05342.1"/>
    <property type="match status" value="1"/>
</dbReference>
<dbReference type="PANTHER" id="PTHR48102:SF7">
    <property type="entry name" value="ATP-DEPENDENT CLP PROTEASE ATP-BINDING SUBUNIT CLPX-LIKE, MITOCHONDRIAL"/>
    <property type="match status" value="1"/>
</dbReference>
<dbReference type="PANTHER" id="PTHR48102">
    <property type="entry name" value="ATP-DEPENDENT CLP PROTEASE ATP-BINDING SUBUNIT CLPX-LIKE, MITOCHONDRIAL-RELATED"/>
    <property type="match status" value="1"/>
</dbReference>
<dbReference type="Pfam" id="PF07724">
    <property type="entry name" value="AAA_2"/>
    <property type="match status" value="1"/>
</dbReference>
<dbReference type="Pfam" id="PF10431">
    <property type="entry name" value="ClpB_D2-small"/>
    <property type="match status" value="1"/>
</dbReference>
<dbReference type="Pfam" id="PF06689">
    <property type="entry name" value="zf-C4_ClpX"/>
    <property type="match status" value="1"/>
</dbReference>
<dbReference type="SMART" id="SM00382">
    <property type="entry name" value="AAA"/>
    <property type="match status" value="1"/>
</dbReference>
<dbReference type="SMART" id="SM01086">
    <property type="entry name" value="ClpB_D2-small"/>
    <property type="match status" value="1"/>
</dbReference>
<dbReference type="SMART" id="SM00994">
    <property type="entry name" value="zf-C4_ClpX"/>
    <property type="match status" value="1"/>
</dbReference>
<dbReference type="SUPFAM" id="SSF57716">
    <property type="entry name" value="Glucocorticoid receptor-like (DNA-binding domain)"/>
    <property type="match status" value="1"/>
</dbReference>
<dbReference type="SUPFAM" id="SSF52540">
    <property type="entry name" value="P-loop containing nucleoside triphosphate hydrolases"/>
    <property type="match status" value="1"/>
</dbReference>
<dbReference type="PROSITE" id="PS51902">
    <property type="entry name" value="CLPX_ZB"/>
    <property type="match status" value="1"/>
</dbReference>
<keyword id="KW-0067">ATP-binding</keyword>
<keyword id="KW-0143">Chaperone</keyword>
<keyword id="KW-0479">Metal-binding</keyword>
<keyword id="KW-0547">Nucleotide-binding</keyword>
<keyword id="KW-1185">Reference proteome</keyword>
<keyword id="KW-0862">Zinc</keyword>